<sequence length="298" mass="33382">MATANLRRGYVLGLTAYVIWGLFPLYFKLLERIPAVEIIVQRAVWSALFGAVLLLFWKHPGWWRELRQNPQRFVVLAASGLLIASNWMTYVWAVNNGHMLEASLGYYINPLINVMLGMLLLKERLRPLQWLAVALASLGVAQQVWQLGSLPWVSLVLALTFGFYGLIRKKAPVAALPGLVVETWLLLPLALVWLLFFADGPTSETAFWSTPEALWVVAAGPVTLVPLVCFNAAARHLPYATLGFLQYLAPTLVLLQAILLFGEHLDSSRLTAFAFIWLALAVYSFDAWRSLRRLPQPG</sequence>
<comment type="subcellular location">
    <subcellularLocation>
        <location evidence="2">Cell membrane</location>
        <topology evidence="2">Multi-pass membrane protein</topology>
    </subcellularLocation>
</comment>
<comment type="similarity">
    <text evidence="2">Belongs to the EamA transporter family.</text>
</comment>
<feature type="chain" id="PRO_0000108160" description="Uncharacterized transporter PA0485">
    <location>
        <begin position="1"/>
        <end position="298"/>
    </location>
</feature>
<feature type="transmembrane region" description="Helical" evidence="1">
    <location>
        <begin position="9"/>
        <end position="28"/>
    </location>
</feature>
<feature type="transmembrane region" description="Helical" evidence="1">
    <location>
        <begin position="38"/>
        <end position="60"/>
    </location>
</feature>
<feature type="transmembrane region" description="Helical" evidence="1">
    <location>
        <begin position="72"/>
        <end position="94"/>
    </location>
</feature>
<feature type="transmembrane region" description="Helical" evidence="1">
    <location>
        <begin position="104"/>
        <end position="121"/>
    </location>
</feature>
<feature type="transmembrane region" description="Helical" evidence="1">
    <location>
        <begin position="128"/>
        <end position="145"/>
    </location>
</feature>
<feature type="transmembrane region" description="Helical" evidence="1">
    <location>
        <begin position="150"/>
        <end position="167"/>
    </location>
</feature>
<feature type="transmembrane region" description="Helical" evidence="1">
    <location>
        <begin position="174"/>
        <end position="196"/>
    </location>
</feature>
<feature type="transmembrane region" description="Helical" evidence="1">
    <location>
        <begin position="211"/>
        <end position="233"/>
    </location>
</feature>
<feature type="transmembrane region" description="Helical" evidence="1">
    <location>
        <begin position="240"/>
        <end position="262"/>
    </location>
</feature>
<feature type="transmembrane region" description="Helical" evidence="1">
    <location>
        <begin position="272"/>
        <end position="291"/>
    </location>
</feature>
<feature type="domain" description="EamA">
    <location>
        <begin position="18"/>
        <end position="141"/>
    </location>
</feature>
<accession>Q9I633</accession>
<gene>
    <name type="ordered locus">PA0485</name>
</gene>
<proteinExistence type="inferred from homology"/>
<dbReference type="EMBL" id="AE004091">
    <property type="protein sequence ID" value="AAG03874.1"/>
    <property type="molecule type" value="Genomic_DNA"/>
</dbReference>
<dbReference type="PIR" id="H83583">
    <property type="entry name" value="H83583"/>
</dbReference>
<dbReference type="RefSeq" id="NP_249176.1">
    <property type="nucleotide sequence ID" value="NC_002516.2"/>
</dbReference>
<dbReference type="SMR" id="Q9I633"/>
<dbReference type="FunCoup" id="Q9I633">
    <property type="interactions" value="152"/>
</dbReference>
<dbReference type="STRING" id="208964.PA0485"/>
<dbReference type="PaxDb" id="208964-PA0485"/>
<dbReference type="GeneID" id="878192"/>
<dbReference type="KEGG" id="pae:PA0485"/>
<dbReference type="PATRIC" id="fig|208964.12.peg.512"/>
<dbReference type="PseudoCAP" id="PA0485"/>
<dbReference type="HOGENOM" id="CLU_054508_1_0_6"/>
<dbReference type="InParanoid" id="Q9I633"/>
<dbReference type="OrthoDB" id="369870at2"/>
<dbReference type="PhylomeDB" id="Q9I633"/>
<dbReference type="BioCyc" id="PAER208964:G1FZ6-490-MONOMER"/>
<dbReference type="Proteomes" id="UP000002438">
    <property type="component" value="Chromosome"/>
</dbReference>
<dbReference type="GO" id="GO:0005886">
    <property type="term" value="C:plasma membrane"/>
    <property type="evidence" value="ECO:0000318"/>
    <property type="project" value="GO_Central"/>
</dbReference>
<dbReference type="InterPro" id="IPR000620">
    <property type="entry name" value="EamA_dom"/>
</dbReference>
<dbReference type="InterPro" id="IPR004626">
    <property type="entry name" value="RarD"/>
</dbReference>
<dbReference type="NCBIfam" id="TIGR00688">
    <property type="entry name" value="rarD"/>
    <property type="match status" value="1"/>
</dbReference>
<dbReference type="PANTHER" id="PTHR22911">
    <property type="entry name" value="ACYL-MALONYL CONDENSING ENZYME-RELATED"/>
    <property type="match status" value="1"/>
</dbReference>
<dbReference type="PANTHER" id="PTHR22911:SF137">
    <property type="entry name" value="SOLUTE CARRIER FAMILY 35 MEMBER G2-RELATED"/>
    <property type="match status" value="1"/>
</dbReference>
<dbReference type="Pfam" id="PF00892">
    <property type="entry name" value="EamA"/>
    <property type="match status" value="1"/>
</dbReference>
<dbReference type="SUPFAM" id="SSF103481">
    <property type="entry name" value="Multidrug resistance efflux transporter EmrE"/>
    <property type="match status" value="2"/>
</dbReference>
<reference key="1">
    <citation type="journal article" date="2000" name="Nature">
        <title>Complete genome sequence of Pseudomonas aeruginosa PAO1, an opportunistic pathogen.</title>
        <authorList>
            <person name="Stover C.K."/>
            <person name="Pham X.-Q.T."/>
            <person name="Erwin A.L."/>
            <person name="Mizoguchi S.D."/>
            <person name="Warrener P."/>
            <person name="Hickey M.J."/>
            <person name="Brinkman F.S.L."/>
            <person name="Hufnagle W.O."/>
            <person name="Kowalik D.J."/>
            <person name="Lagrou M."/>
            <person name="Garber R.L."/>
            <person name="Goltry L."/>
            <person name="Tolentino E."/>
            <person name="Westbrock-Wadman S."/>
            <person name="Yuan Y."/>
            <person name="Brody L.L."/>
            <person name="Coulter S.N."/>
            <person name="Folger K.R."/>
            <person name="Kas A."/>
            <person name="Larbig K."/>
            <person name="Lim R.M."/>
            <person name="Smith K.A."/>
            <person name="Spencer D.H."/>
            <person name="Wong G.K.-S."/>
            <person name="Wu Z."/>
            <person name="Paulsen I.T."/>
            <person name="Reizer J."/>
            <person name="Saier M.H. Jr."/>
            <person name="Hancock R.E.W."/>
            <person name="Lory S."/>
            <person name="Olson M.V."/>
        </authorList>
    </citation>
    <scope>NUCLEOTIDE SEQUENCE [LARGE SCALE GENOMIC DNA]</scope>
    <source>
        <strain>ATCC 15692 / DSM 22644 / CIP 104116 / JCM 14847 / LMG 12228 / 1C / PRS 101 / PAO1</strain>
    </source>
</reference>
<evidence type="ECO:0000255" key="1"/>
<evidence type="ECO:0000305" key="2"/>
<keyword id="KW-1003">Cell membrane</keyword>
<keyword id="KW-0472">Membrane</keyword>
<keyword id="KW-1185">Reference proteome</keyword>
<keyword id="KW-0812">Transmembrane</keyword>
<keyword id="KW-1133">Transmembrane helix</keyword>
<keyword id="KW-0813">Transport</keyword>
<name>Y485_PSEAE</name>
<protein>
    <recommendedName>
        <fullName>Uncharacterized transporter PA0485</fullName>
    </recommendedName>
</protein>
<organism>
    <name type="scientific">Pseudomonas aeruginosa (strain ATCC 15692 / DSM 22644 / CIP 104116 / JCM 14847 / LMG 12228 / 1C / PRS 101 / PAO1)</name>
    <dbReference type="NCBI Taxonomy" id="208964"/>
    <lineage>
        <taxon>Bacteria</taxon>
        <taxon>Pseudomonadati</taxon>
        <taxon>Pseudomonadota</taxon>
        <taxon>Gammaproteobacteria</taxon>
        <taxon>Pseudomonadales</taxon>
        <taxon>Pseudomonadaceae</taxon>
        <taxon>Pseudomonas</taxon>
    </lineage>
</organism>